<gene>
    <name type="primary">HSP70-18</name>
    <name type="synonym">HSP70T-1</name>
    <name type="ordered locus">At1g56410</name>
    <name type="ORF">F13N6.9</name>
</gene>
<evidence type="ECO:0000305" key="1"/>
<organism>
    <name type="scientific">Arabidopsis thaliana</name>
    <name type="common">Mouse-ear cress</name>
    <dbReference type="NCBI Taxonomy" id="3702"/>
    <lineage>
        <taxon>Eukaryota</taxon>
        <taxon>Viridiplantae</taxon>
        <taxon>Streptophyta</taxon>
        <taxon>Embryophyta</taxon>
        <taxon>Tracheophyta</taxon>
        <taxon>Spermatophyta</taxon>
        <taxon>Magnoliopsida</taxon>
        <taxon>eudicotyledons</taxon>
        <taxon>Gunneridae</taxon>
        <taxon>Pentapetalae</taxon>
        <taxon>rosids</taxon>
        <taxon>malvids</taxon>
        <taxon>Brassicales</taxon>
        <taxon>Brassicaceae</taxon>
        <taxon>Camelineae</taxon>
        <taxon>Arabidopsis</taxon>
    </lineage>
</organism>
<name>HSP7N_ARATH</name>
<dbReference type="EMBL" id="AC058785">
    <property type="protein sequence ID" value="AAG51503.1"/>
    <property type="molecule type" value="Genomic_DNA"/>
</dbReference>
<dbReference type="EMBL" id="CP002684">
    <property type="protein sequence ID" value="AEE33389.1"/>
    <property type="molecule type" value="Genomic_DNA"/>
</dbReference>
<dbReference type="EMBL" id="DQ446367">
    <property type="protein sequence ID" value="ABE65717.1"/>
    <property type="molecule type" value="mRNA"/>
</dbReference>
<dbReference type="PIR" id="H96605">
    <property type="entry name" value="H96605"/>
</dbReference>
<dbReference type="PIR" id="JA0171">
    <property type="entry name" value="JA0171"/>
</dbReference>
<dbReference type="SMR" id="Q9C7X7"/>
<dbReference type="BioGRID" id="27319">
    <property type="interactions" value="14"/>
</dbReference>
<dbReference type="FunCoup" id="Q9C7X7">
    <property type="interactions" value="1762"/>
</dbReference>
<dbReference type="STRING" id="3702.Q9C7X7"/>
<dbReference type="GlyGen" id="Q9C7X7">
    <property type="glycosylation" value="1 site"/>
</dbReference>
<dbReference type="MetOSite" id="Q9C7X7"/>
<dbReference type="PaxDb" id="3702-AT1G56410.1"/>
<dbReference type="ProteomicsDB" id="232137"/>
<dbReference type="EnsemblPlants" id="AT1G56410.1">
    <property type="protein sequence ID" value="AT1G56410.1"/>
    <property type="gene ID" value="AT1G56410"/>
</dbReference>
<dbReference type="GeneID" id="842094"/>
<dbReference type="Gramene" id="AT1G56410.1">
    <property type="protein sequence ID" value="AT1G56410.1"/>
    <property type="gene ID" value="AT1G56410"/>
</dbReference>
<dbReference type="KEGG" id="ath:AT1G56410"/>
<dbReference type="Araport" id="AT1G56410"/>
<dbReference type="TAIR" id="AT1G56410">
    <property type="gene designation" value="ERD2"/>
</dbReference>
<dbReference type="eggNOG" id="KOG0101">
    <property type="taxonomic scope" value="Eukaryota"/>
</dbReference>
<dbReference type="HOGENOM" id="CLU_005965_0_1_1"/>
<dbReference type="InParanoid" id="Q9C7X7"/>
<dbReference type="OMA" id="QADKPMI"/>
<dbReference type="OrthoDB" id="3789372at2759"/>
<dbReference type="PhylomeDB" id="Q9C7X7"/>
<dbReference type="PRO" id="PR:Q9C7X7"/>
<dbReference type="Proteomes" id="UP000006548">
    <property type="component" value="Chromosome 1"/>
</dbReference>
<dbReference type="ExpressionAtlas" id="Q9C7X7">
    <property type="expression patterns" value="baseline and differential"/>
</dbReference>
<dbReference type="GO" id="GO:0009941">
    <property type="term" value="C:chloroplast envelope"/>
    <property type="evidence" value="ECO:0007005"/>
    <property type="project" value="TAIR"/>
</dbReference>
<dbReference type="GO" id="GO:0005829">
    <property type="term" value="C:cytosol"/>
    <property type="evidence" value="ECO:0007005"/>
    <property type="project" value="TAIR"/>
</dbReference>
<dbReference type="GO" id="GO:0005524">
    <property type="term" value="F:ATP binding"/>
    <property type="evidence" value="ECO:0007669"/>
    <property type="project" value="UniProtKB-KW"/>
</dbReference>
<dbReference type="GO" id="GO:0140662">
    <property type="term" value="F:ATP-dependent protein folding chaperone"/>
    <property type="evidence" value="ECO:0007669"/>
    <property type="project" value="InterPro"/>
</dbReference>
<dbReference type="GO" id="GO:0009408">
    <property type="term" value="P:response to heat"/>
    <property type="evidence" value="ECO:0000270"/>
    <property type="project" value="TAIR"/>
</dbReference>
<dbReference type="CDD" id="cd10233">
    <property type="entry name" value="ASKHA_NBD_HSP70_HSPA1"/>
    <property type="match status" value="1"/>
</dbReference>
<dbReference type="FunFam" id="2.60.34.10:FF:000002">
    <property type="entry name" value="Heat shock 70 kDa"/>
    <property type="match status" value="1"/>
</dbReference>
<dbReference type="FunFam" id="3.90.640.10:FF:000002">
    <property type="entry name" value="Heat shock 70 kDa"/>
    <property type="match status" value="1"/>
</dbReference>
<dbReference type="FunFam" id="3.30.420.40:FF:000172">
    <property type="entry name" value="Heat shock 70 kDa protein"/>
    <property type="match status" value="1"/>
</dbReference>
<dbReference type="FunFam" id="3.30.30.30:FF:000001">
    <property type="entry name" value="heat shock 70 kDa protein-like"/>
    <property type="match status" value="1"/>
</dbReference>
<dbReference type="FunFam" id="3.30.420.40:FF:000465">
    <property type="entry name" value="Heat shock cognate 70 kDa protein 2"/>
    <property type="match status" value="1"/>
</dbReference>
<dbReference type="FunFam" id="3.30.420.40:FF:000026">
    <property type="entry name" value="Heat shock protein 70"/>
    <property type="match status" value="1"/>
</dbReference>
<dbReference type="Gene3D" id="1.20.1270.10">
    <property type="match status" value="1"/>
</dbReference>
<dbReference type="Gene3D" id="3.30.30.30">
    <property type="match status" value="1"/>
</dbReference>
<dbReference type="Gene3D" id="3.30.420.40">
    <property type="match status" value="2"/>
</dbReference>
<dbReference type="Gene3D" id="3.90.640.10">
    <property type="entry name" value="Actin, Chain A, domain 4"/>
    <property type="match status" value="1"/>
</dbReference>
<dbReference type="Gene3D" id="2.60.34.10">
    <property type="entry name" value="Substrate Binding Domain Of DNAk, Chain A, domain 1"/>
    <property type="match status" value="1"/>
</dbReference>
<dbReference type="InterPro" id="IPR043129">
    <property type="entry name" value="ATPase_NBD"/>
</dbReference>
<dbReference type="InterPro" id="IPR018181">
    <property type="entry name" value="Heat_shock_70_CS"/>
</dbReference>
<dbReference type="InterPro" id="IPR029048">
    <property type="entry name" value="HSP70_C_sf"/>
</dbReference>
<dbReference type="InterPro" id="IPR029047">
    <property type="entry name" value="HSP70_peptide-bd_sf"/>
</dbReference>
<dbReference type="InterPro" id="IPR013126">
    <property type="entry name" value="Hsp_70_fam"/>
</dbReference>
<dbReference type="NCBIfam" id="NF001413">
    <property type="entry name" value="PRK00290.1"/>
    <property type="match status" value="1"/>
</dbReference>
<dbReference type="PANTHER" id="PTHR19375">
    <property type="entry name" value="HEAT SHOCK PROTEIN 70KDA"/>
    <property type="match status" value="1"/>
</dbReference>
<dbReference type="Pfam" id="PF00012">
    <property type="entry name" value="HSP70"/>
    <property type="match status" value="1"/>
</dbReference>
<dbReference type="PRINTS" id="PR00301">
    <property type="entry name" value="HEATSHOCK70"/>
</dbReference>
<dbReference type="SUPFAM" id="SSF53067">
    <property type="entry name" value="Actin-like ATPase domain"/>
    <property type="match status" value="2"/>
</dbReference>
<dbReference type="SUPFAM" id="SSF100934">
    <property type="entry name" value="Heat shock protein 70kD (HSP70), C-terminal subdomain"/>
    <property type="match status" value="1"/>
</dbReference>
<dbReference type="SUPFAM" id="SSF100920">
    <property type="entry name" value="Heat shock protein 70kD (HSP70), peptide-binding domain"/>
    <property type="match status" value="1"/>
</dbReference>
<dbReference type="PROSITE" id="PS00297">
    <property type="entry name" value="HSP70_1"/>
    <property type="match status" value="1"/>
</dbReference>
<dbReference type="PROSITE" id="PS00329">
    <property type="entry name" value="HSP70_2"/>
    <property type="match status" value="1"/>
</dbReference>
<dbReference type="PROSITE" id="PS01036">
    <property type="entry name" value="HSP70_3"/>
    <property type="match status" value="1"/>
</dbReference>
<proteinExistence type="evidence at transcript level"/>
<comment type="similarity">
    <text evidence="1">Belongs to the heat shock protein 70 (TC 1.A.33) family. DnaK subfamily.</text>
</comment>
<reference key="1">
    <citation type="journal article" date="2000" name="Nature">
        <title>Sequence and analysis of chromosome 1 of the plant Arabidopsis thaliana.</title>
        <authorList>
            <person name="Theologis A."/>
            <person name="Ecker J.R."/>
            <person name="Palm C.J."/>
            <person name="Federspiel N.A."/>
            <person name="Kaul S."/>
            <person name="White O."/>
            <person name="Alonso J."/>
            <person name="Altafi H."/>
            <person name="Araujo R."/>
            <person name="Bowman C.L."/>
            <person name="Brooks S.Y."/>
            <person name="Buehler E."/>
            <person name="Chan A."/>
            <person name="Chao Q."/>
            <person name="Chen H."/>
            <person name="Cheuk R.F."/>
            <person name="Chin C.W."/>
            <person name="Chung M.K."/>
            <person name="Conn L."/>
            <person name="Conway A.B."/>
            <person name="Conway A.R."/>
            <person name="Creasy T.H."/>
            <person name="Dewar K."/>
            <person name="Dunn P."/>
            <person name="Etgu P."/>
            <person name="Feldblyum T.V."/>
            <person name="Feng J.-D."/>
            <person name="Fong B."/>
            <person name="Fujii C.Y."/>
            <person name="Gill J.E."/>
            <person name="Goldsmith A.D."/>
            <person name="Haas B."/>
            <person name="Hansen N.F."/>
            <person name="Hughes B."/>
            <person name="Huizar L."/>
            <person name="Hunter J.L."/>
            <person name="Jenkins J."/>
            <person name="Johnson-Hopson C."/>
            <person name="Khan S."/>
            <person name="Khaykin E."/>
            <person name="Kim C.J."/>
            <person name="Koo H.L."/>
            <person name="Kremenetskaia I."/>
            <person name="Kurtz D.B."/>
            <person name="Kwan A."/>
            <person name="Lam B."/>
            <person name="Langin-Hooper S."/>
            <person name="Lee A."/>
            <person name="Lee J.M."/>
            <person name="Lenz C.A."/>
            <person name="Li J.H."/>
            <person name="Li Y.-P."/>
            <person name="Lin X."/>
            <person name="Liu S.X."/>
            <person name="Liu Z.A."/>
            <person name="Luros J.S."/>
            <person name="Maiti R."/>
            <person name="Marziali A."/>
            <person name="Militscher J."/>
            <person name="Miranda M."/>
            <person name="Nguyen M."/>
            <person name="Nierman W.C."/>
            <person name="Osborne B.I."/>
            <person name="Pai G."/>
            <person name="Peterson J."/>
            <person name="Pham P.K."/>
            <person name="Rizzo M."/>
            <person name="Rooney T."/>
            <person name="Rowley D."/>
            <person name="Sakano H."/>
            <person name="Salzberg S.L."/>
            <person name="Schwartz J.R."/>
            <person name="Shinn P."/>
            <person name="Southwick A.M."/>
            <person name="Sun H."/>
            <person name="Tallon L.J."/>
            <person name="Tambunga G."/>
            <person name="Toriumi M.J."/>
            <person name="Town C.D."/>
            <person name="Utterback T."/>
            <person name="Van Aken S."/>
            <person name="Vaysberg M."/>
            <person name="Vysotskaia V.S."/>
            <person name="Walker M."/>
            <person name="Wu D."/>
            <person name="Yu G."/>
            <person name="Fraser C.M."/>
            <person name="Venter J.C."/>
            <person name="Davis R.W."/>
        </authorList>
    </citation>
    <scope>NUCLEOTIDE SEQUENCE [LARGE SCALE GENOMIC DNA]</scope>
    <source>
        <strain>cv. Columbia</strain>
    </source>
</reference>
<reference key="2">
    <citation type="journal article" date="2017" name="Plant J.">
        <title>Araport11: a complete reannotation of the Arabidopsis thaliana reference genome.</title>
        <authorList>
            <person name="Cheng C.Y."/>
            <person name="Krishnakumar V."/>
            <person name="Chan A.P."/>
            <person name="Thibaud-Nissen F."/>
            <person name="Schobel S."/>
            <person name="Town C.D."/>
        </authorList>
    </citation>
    <scope>GENOME REANNOTATION</scope>
    <source>
        <strain>cv. Columbia</strain>
    </source>
</reference>
<reference key="3">
    <citation type="journal article" date="2006" name="Plant Biotechnol. J.">
        <title>Simultaneous high-throughput recombinational cloning of open reading frames in closed and open configurations.</title>
        <authorList>
            <person name="Underwood B.A."/>
            <person name="Vanderhaeghen R."/>
            <person name="Whitford R."/>
            <person name="Town C.D."/>
            <person name="Hilson P."/>
        </authorList>
    </citation>
    <scope>NUCLEOTIDE SEQUENCE [LARGE SCALE MRNA]</scope>
    <source>
        <strain>cv. Columbia</strain>
    </source>
</reference>
<reference key="4">
    <citation type="journal article" date="2001" name="Cell Stress Chaperones">
        <title>Genomic analysis of the Hsp70 superfamily in Arabidopsis thaliana.</title>
        <authorList>
            <person name="Lin B.L."/>
            <person name="Wang J.S."/>
            <person name="Liu H.C."/>
            <person name="Chen R.W."/>
            <person name="Meyer Y."/>
            <person name="Barakat A."/>
            <person name="Delseny M."/>
        </authorList>
    </citation>
    <scope>GENE FAMILY</scope>
    <scope>NOMENCLATURE</scope>
</reference>
<reference key="5">
    <citation type="journal article" date="2001" name="Plant Physiol.">
        <title>Comprehensive expression profile analysis of the Arabidopsis Hsp70 gene family.</title>
        <authorList>
            <person name="Sung D.Y."/>
            <person name="Vierling E."/>
            <person name="Guy C.L."/>
        </authorList>
    </citation>
    <scope>DNAK GENE SUBFAMILY</scope>
</reference>
<keyword id="KW-0067">ATP-binding</keyword>
<keyword id="KW-0143">Chaperone</keyword>
<keyword id="KW-0547">Nucleotide-binding</keyword>
<keyword id="KW-1185">Reference proteome</keyword>
<keyword id="KW-0346">Stress response</keyword>
<feature type="chain" id="PRO_0000415431" description="Heat shock 70 kDa protein 18">
    <location>
        <begin position="1"/>
        <end position="617"/>
    </location>
</feature>
<protein>
    <recommendedName>
        <fullName>Heat shock 70 kDa protein 18</fullName>
    </recommendedName>
    <alternativeName>
        <fullName>Heat shock protein 70-18</fullName>
        <shortName>AtHsp70-18</shortName>
    </alternativeName>
    <alternativeName>
        <fullName>Heat-shock protein 70T-1</fullName>
    </alternativeName>
</protein>
<sequence>MAGKGEGPAIGIDLGTTYSCVGVWQHDRVEIIANDQGNRTTPSYVAFTDSERLIGDAAKNQVAMNPVNTVFDAKRLIGRRFSDASVQSDMKFWPFKVTPGQADKPMIFVNYKGEEKQFAAEEISSMVLIKMREIAEAYLGSSIKNAVVTVPAYFNDSQRQATKDAGVIAGLNVLRIINEPTAAAIAYGLDKKATSVGIKNVLIFDLGGGTFDVSLLTIEEGIFEVKATAGDTHLGGEDFDNRMVNHFVQEFKRKNKKDISGDARALRRLRTACERAKRTLSSTAQTTVEVDSLFEGIDFYSPITRAKFEEMNMDLFRKCMEPVMKCLRDSKMDKSMVHDVVLVGGSTRIPKVQQLLQDFFNGKELCKSINPDEAVAYGAAVQAAILSGEGNEKVQDLLLLDVTPLSLGIETIGGVMTTLIQRNTTIPAKKEQEFTTTVDNQPDVLIQVYEGERARTIDNNILGQFVLSGIPPAPRGIPQFTVCFDIDSNGILNVSAEDKATGKKNKITITNDKGRLSKDDIEKMVQEAEKYKSEDEEHKKKVEAKNGLENYAYNVGNTLRDMGEKLPAADKKKFEDSIEEVIQWLDDNQLAEADEFEHKMKELESVWSTIITKMYQG</sequence>
<accession>Q9C7X7</accession>